<gene>
    <name type="primary">Syncrip</name>
    <name type="synonym">Hnrpq</name>
    <name type="ORF">Ab2-339</name>
</gene>
<reference key="1">
    <citation type="submission" date="2003-06" db="EMBL/GenBank/DDBJ databases">
        <title>Liver regeneration after PH.</title>
        <authorList>
            <person name="Xu C.S."/>
            <person name="Li W.Q."/>
            <person name="Li Y.C."/>
            <person name="Ma H."/>
            <person name="Wang L."/>
            <person name="Wang S.F."/>
            <person name="Han H.P."/>
            <person name="Wang G.P."/>
            <person name="Chai L.Q."/>
            <person name="Yuan J.Y."/>
            <person name="Yang K.J."/>
            <person name="Yan H.M."/>
            <person name="Chang C.F."/>
            <person name="Zhao L.F."/>
            <person name="Shi J.B."/>
            <person name="Rahman S."/>
            <person name="Wang Q.N."/>
            <person name="Zhang J.B."/>
        </authorList>
    </citation>
    <scope>NUCLEOTIDE SEQUENCE [LARGE SCALE MRNA]</scope>
    <source>
        <tissue>Liver</tissue>
    </source>
</reference>
<sequence>MATEHVNGNGTEEPMDTTSAVIHSENFQTLLDAGLPQKVAEKLDEIYVAGQRKYGGPPPDSVYSGQQPSVGTEIFVGKIPRDLFEDELVPLFEKAGPIWDLRLMMDPLTGLNRGYAFVTFCTKEAAQEAVKLYNNHEIRSGKHIGVCISVANNRLFVGSIPKSKTKEQILEEFSKVTEGLTDVILYHQPDDKKKNRGFCFLEYEDHKTAAQARRRLMSGKVKVWGNVGTVEWADPIEDPDPEVMAKVKVLFVRNLANTVTEEILEKSFSQFGKLERVKKLKDYAFIHFDERDGAVKAMEEMNGKDLEGENIEIVFAKPPDQKRKERKAQRQAAKNQMYDDYYYYGPPHMPPPTRGRGRGGRGGYGYPPDYYGYEDYYDYYGYDYHNYRGGYEDPYYGYEDFQVGARGRGGRGARGAAPSRGRGAAPPRGRAGYSQRGGPGSARGVRGARGGAQQQRGRGVRGARGGRGGNVGGKRKADGYNQPDSKRRQTNNQNWGSQPIAQQPLQGGDHSGNYGYKSENEEFYQDTFGQQWK</sequence>
<dbReference type="EMBL" id="AY325202">
    <property type="protein sequence ID" value="AAP92603.1"/>
    <property type="molecule type" value="mRNA"/>
</dbReference>
<dbReference type="RefSeq" id="NP_001041381.1">
    <property type="nucleotide sequence ID" value="NM_001047916.3"/>
</dbReference>
<dbReference type="SMR" id="Q7TP47"/>
<dbReference type="BioGRID" id="263972">
    <property type="interactions" value="4"/>
</dbReference>
<dbReference type="FunCoup" id="Q7TP47">
    <property type="interactions" value="4333"/>
</dbReference>
<dbReference type="IntAct" id="Q7TP47">
    <property type="interactions" value="3"/>
</dbReference>
<dbReference type="MINT" id="Q7TP47"/>
<dbReference type="STRING" id="10116.ENSRNOP00000065252"/>
<dbReference type="GlyGen" id="Q7TP47">
    <property type="glycosylation" value="1 site, 1 O-linked glycan (1 site)"/>
</dbReference>
<dbReference type="iPTMnet" id="Q7TP47"/>
<dbReference type="PhosphoSitePlus" id="Q7TP47"/>
<dbReference type="jPOST" id="Q7TP47"/>
<dbReference type="PaxDb" id="10116-ENSRNOP00000048433"/>
<dbReference type="Ensembl" id="ENSRNOT00000041655.5">
    <property type="protein sequence ID" value="ENSRNOP00000048433.4"/>
    <property type="gene ID" value="ENSRNOG00000000204.8"/>
</dbReference>
<dbReference type="GeneID" id="363113"/>
<dbReference type="KEGG" id="rno:363113"/>
<dbReference type="UCSC" id="RGD:1305683">
    <property type="organism name" value="rat"/>
</dbReference>
<dbReference type="AGR" id="RGD:1305683"/>
<dbReference type="CTD" id="10492"/>
<dbReference type="RGD" id="1305683">
    <property type="gene designation" value="Syncrip"/>
</dbReference>
<dbReference type="eggNOG" id="KOG0117">
    <property type="taxonomic scope" value="Eukaryota"/>
</dbReference>
<dbReference type="GeneTree" id="ENSGT00940000153511"/>
<dbReference type="InParanoid" id="Q7TP47"/>
<dbReference type="OMA" id="CVEYVCT"/>
<dbReference type="PRO" id="PR:Q7TP47"/>
<dbReference type="Proteomes" id="UP000002494">
    <property type="component" value="Chromosome 8"/>
</dbReference>
<dbReference type="Bgee" id="ENSRNOG00000000204">
    <property type="expression patterns" value="Expressed in thymus and 18 other cell types or tissues"/>
</dbReference>
<dbReference type="ExpressionAtlas" id="Q7TP47">
    <property type="expression patterns" value="baseline and differential"/>
</dbReference>
<dbReference type="GO" id="GO:0071013">
    <property type="term" value="C:catalytic step 2 spliceosome"/>
    <property type="evidence" value="ECO:0000266"/>
    <property type="project" value="RGD"/>
</dbReference>
<dbReference type="GO" id="GO:0070937">
    <property type="term" value="C:CRD-mediated mRNA stability complex"/>
    <property type="evidence" value="ECO:0000250"/>
    <property type="project" value="UniProtKB"/>
</dbReference>
<dbReference type="GO" id="GO:0005737">
    <property type="term" value="C:cytoplasm"/>
    <property type="evidence" value="ECO:0000266"/>
    <property type="project" value="RGD"/>
</dbReference>
<dbReference type="GO" id="GO:0005829">
    <property type="term" value="C:cytosol"/>
    <property type="evidence" value="ECO:0000266"/>
    <property type="project" value="RGD"/>
</dbReference>
<dbReference type="GO" id="GO:0005783">
    <property type="term" value="C:endoplasmic reticulum"/>
    <property type="evidence" value="ECO:0007669"/>
    <property type="project" value="UniProtKB-KW"/>
</dbReference>
<dbReference type="GO" id="GO:0097452">
    <property type="term" value="C:GAIT complex"/>
    <property type="evidence" value="ECO:0000266"/>
    <property type="project" value="RGD"/>
</dbReference>
<dbReference type="GO" id="GO:0098978">
    <property type="term" value="C:glutamatergic synapse"/>
    <property type="evidence" value="ECO:0000314"/>
    <property type="project" value="SynGO"/>
</dbReference>
<dbReference type="GO" id="GO:0071204">
    <property type="term" value="C:histone pre-mRNA 3'end processing complex"/>
    <property type="evidence" value="ECO:0000250"/>
    <property type="project" value="UniProtKB"/>
</dbReference>
<dbReference type="GO" id="GO:0106002">
    <property type="term" value="C:mCRD-mediated mRNA stability complex"/>
    <property type="evidence" value="ECO:0000266"/>
    <property type="project" value="RGD"/>
</dbReference>
<dbReference type="GO" id="GO:0043025">
    <property type="term" value="C:neuronal cell body"/>
    <property type="evidence" value="ECO:0000314"/>
    <property type="project" value="RGD"/>
</dbReference>
<dbReference type="GO" id="GO:0005654">
    <property type="term" value="C:nucleoplasm"/>
    <property type="evidence" value="ECO:0007669"/>
    <property type="project" value="UniProtKB-SubCell"/>
</dbReference>
<dbReference type="GO" id="GO:0005634">
    <property type="term" value="C:nucleus"/>
    <property type="evidence" value="ECO:0000318"/>
    <property type="project" value="GO_Central"/>
</dbReference>
<dbReference type="GO" id="GO:0014069">
    <property type="term" value="C:postsynaptic density"/>
    <property type="evidence" value="ECO:0000314"/>
    <property type="project" value="SynGO"/>
</dbReference>
<dbReference type="GO" id="GO:1990635">
    <property type="term" value="C:proximal dendrite"/>
    <property type="evidence" value="ECO:0000314"/>
    <property type="project" value="RGD"/>
</dbReference>
<dbReference type="GO" id="GO:1990904">
    <property type="term" value="C:ribonucleoprotein complex"/>
    <property type="evidence" value="ECO:0000250"/>
    <property type="project" value="UniProtKB"/>
</dbReference>
<dbReference type="GO" id="GO:0003730">
    <property type="term" value="F:mRNA 3'-UTR binding"/>
    <property type="evidence" value="ECO:0000314"/>
    <property type="project" value="RGD"/>
</dbReference>
<dbReference type="GO" id="GO:0048027">
    <property type="term" value="F:mRNA 5'-UTR binding"/>
    <property type="evidence" value="ECO:0000314"/>
    <property type="project" value="RGD"/>
</dbReference>
<dbReference type="GO" id="GO:0008143">
    <property type="term" value="F:poly(A) binding"/>
    <property type="evidence" value="ECO:0000266"/>
    <property type="project" value="RGD"/>
</dbReference>
<dbReference type="GO" id="GO:0071346">
    <property type="term" value="P:cellular response to type II interferon"/>
    <property type="evidence" value="ECO:0000266"/>
    <property type="project" value="RGD"/>
</dbReference>
<dbReference type="GO" id="GO:0007623">
    <property type="term" value="P:circadian rhythm"/>
    <property type="evidence" value="ECO:0000270"/>
    <property type="project" value="RGD"/>
</dbReference>
<dbReference type="GO" id="GO:0070934">
    <property type="term" value="P:CRD-mediated mRNA stabilization"/>
    <property type="evidence" value="ECO:0000266"/>
    <property type="project" value="RGD"/>
</dbReference>
<dbReference type="GO" id="GO:0006397">
    <property type="term" value="P:mRNA processing"/>
    <property type="evidence" value="ECO:0007669"/>
    <property type="project" value="UniProtKB-KW"/>
</dbReference>
<dbReference type="GO" id="GO:0090367">
    <property type="term" value="P:negative regulation of mRNA modification"/>
    <property type="evidence" value="ECO:0000315"/>
    <property type="project" value="RGD"/>
</dbReference>
<dbReference type="GO" id="GO:1900152">
    <property type="term" value="P:negative regulation of nuclear-transcribed mRNA catabolic process, deadenylation-dependent decay"/>
    <property type="evidence" value="ECO:0000266"/>
    <property type="project" value="RGD"/>
</dbReference>
<dbReference type="GO" id="GO:0017148">
    <property type="term" value="P:negative regulation of translation"/>
    <property type="evidence" value="ECO:0000266"/>
    <property type="project" value="RGD"/>
</dbReference>
<dbReference type="GO" id="GO:2000767">
    <property type="term" value="P:positive regulation of cytoplasmic translation"/>
    <property type="evidence" value="ECO:0000266"/>
    <property type="project" value="RGD"/>
</dbReference>
<dbReference type="GO" id="GO:0045727">
    <property type="term" value="P:positive regulation of translation"/>
    <property type="evidence" value="ECO:0000315"/>
    <property type="project" value="RGD"/>
</dbReference>
<dbReference type="GO" id="GO:0008380">
    <property type="term" value="P:RNA splicing"/>
    <property type="evidence" value="ECO:0007669"/>
    <property type="project" value="UniProtKB-KW"/>
</dbReference>
<dbReference type="CDD" id="cd12483">
    <property type="entry name" value="RRM1_hnRNPQ"/>
    <property type="match status" value="1"/>
</dbReference>
<dbReference type="CDD" id="cd12489">
    <property type="entry name" value="RRM2_hnRNPQ"/>
    <property type="match status" value="1"/>
</dbReference>
<dbReference type="CDD" id="cd12495">
    <property type="entry name" value="RRM3_hnRNPQ"/>
    <property type="match status" value="1"/>
</dbReference>
<dbReference type="FunFam" id="3.30.70.330:FF:000023">
    <property type="entry name" value="Heterogeneous nuclear ribonucleoprotein q isoform"/>
    <property type="match status" value="1"/>
</dbReference>
<dbReference type="FunFam" id="3.30.70.330:FF:000024">
    <property type="entry name" value="Heterogeneous nuclear ribonucleoprotein q isoform"/>
    <property type="match status" value="1"/>
</dbReference>
<dbReference type="FunFam" id="3.30.70.330:FF:000027">
    <property type="entry name" value="Heterogeneous nuclear ribonucleoprotein q isoform"/>
    <property type="match status" value="1"/>
</dbReference>
<dbReference type="Gene3D" id="3.30.70.330">
    <property type="match status" value="3"/>
</dbReference>
<dbReference type="InterPro" id="IPR006535">
    <property type="entry name" value="HnRNP_R/Q_splicing_fac"/>
</dbReference>
<dbReference type="InterPro" id="IPR034544">
    <property type="entry name" value="hnRNPQ_RRM1"/>
</dbReference>
<dbReference type="InterPro" id="IPR034548">
    <property type="entry name" value="hnRNPQ_RRM2"/>
</dbReference>
<dbReference type="InterPro" id="IPR012677">
    <property type="entry name" value="Nucleotide-bd_a/b_plait_sf"/>
</dbReference>
<dbReference type="InterPro" id="IPR035979">
    <property type="entry name" value="RBD_domain_sf"/>
</dbReference>
<dbReference type="InterPro" id="IPR000504">
    <property type="entry name" value="RRM_dom"/>
</dbReference>
<dbReference type="NCBIfam" id="TIGR01648">
    <property type="entry name" value="hnRNP-R-Q"/>
    <property type="match status" value="1"/>
</dbReference>
<dbReference type="PANTHER" id="PTHR21245">
    <property type="entry name" value="HETEROGENEOUS NUCLEAR RIBONUCLEOPROTEIN"/>
    <property type="match status" value="1"/>
</dbReference>
<dbReference type="Pfam" id="PF00076">
    <property type="entry name" value="RRM_1"/>
    <property type="match status" value="3"/>
</dbReference>
<dbReference type="SMART" id="SM00360">
    <property type="entry name" value="RRM"/>
    <property type="match status" value="3"/>
</dbReference>
<dbReference type="SUPFAM" id="SSF54928">
    <property type="entry name" value="RNA-binding domain, RBD"/>
    <property type="match status" value="3"/>
</dbReference>
<dbReference type="PROSITE" id="PS50102">
    <property type="entry name" value="RRM"/>
    <property type="match status" value="3"/>
</dbReference>
<name>HNRPQ_RAT</name>
<organism>
    <name type="scientific">Rattus norvegicus</name>
    <name type="common">Rat</name>
    <dbReference type="NCBI Taxonomy" id="10116"/>
    <lineage>
        <taxon>Eukaryota</taxon>
        <taxon>Metazoa</taxon>
        <taxon>Chordata</taxon>
        <taxon>Craniata</taxon>
        <taxon>Vertebrata</taxon>
        <taxon>Euteleostomi</taxon>
        <taxon>Mammalia</taxon>
        <taxon>Eutheria</taxon>
        <taxon>Euarchontoglires</taxon>
        <taxon>Glires</taxon>
        <taxon>Rodentia</taxon>
        <taxon>Myomorpha</taxon>
        <taxon>Muroidea</taxon>
        <taxon>Muridae</taxon>
        <taxon>Murinae</taxon>
        <taxon>Rattus</taxon>
    </lineage>
</organism>
<comment type="function">
    <text evidence="1">Heterogenous nuclear ribonucleoprotein (hnRNP) implicated in mRNA processing mechanisms. Component of the CRD-mediated complex that promotes MYC mRNA stability. Is associated in vitro with pre-mRNA, splicing intermediates and mature mRNA protein complexes. Binds to apoB mRNA AU-rich sequences. Part of the APOB mRNA editosome complex and may modulate the postranscriptional C to U RNA-editing of the APOB mRNA through either by binding to A1CF (APOBEC1 complementation factor), to APOBEC1 or to RNA itself. May be involved in translationally coupled mRNA turnover. Implicated with other RNA-binding proteins in the cytoplasmic deadenylation/translational and decay interplay of the FOS mRNA mediated by the major coding-region determinant of instability (mCRD) domain. Interacts in vitro preferentially with poly(A) and poly(U) RNA sequences. May be involved in cytoplasmic vesicle-based mRNA transport through interaction with synaptotagmins (By similarity).</text>
</comment>
<comment type="subunit">
    <text evidence="1">Identified in a histone pre-mRNA complex, at least composed of ERI1, LSM11, SLBP, SNRPB, SYNCRIP and YBX1. Identified in the spliceosome C complex (By similarity). Component of the coding region determinant (CRD)-mediated complex, composed of DHX9, HNRNPU, IGF2BP1, SYNCRIP and YBX1. Identified in a mRNP complex, at least composed of DHX9, DDX3X, ELAVL1, HNRNPU, IGF2BP1, ILF3, PABPC1, PCBP2, PTBP2, STAU1, STAU2, SYNCRIP and YBX1. Identified in a mRNP granule complex, at least composed of ACTB, ACTN4, DHX9, ERG, HNRNPA1, HNRNPA2B1, HNRNPAB, HNRNPD, HNRNPL, HNRNPR, HNRNPU, HSPA1, HSPA8, IGF2BP1, ILF2, ILF3, NCBP1, NCL, PABPC1, PABPC4, PABPN1, RPLP0, RPS3, RPS3A, RPS4X, RPS8, RPS9, SYNCRIP, YBX1 and untranslated mRNAs. Component of the APOB mRNA editosome. Interacts with APOBEC1 and A1CF. Part of a complex associated with the FOS mCRD domain and consisting of PABPC1, PAIP1, CSDE1/UNR, HNRPD and SYNCRIP. Interacts with HNRPR, SMN, POLR2A hyperphosphorylated C-terminal domain, minute virus of mice (MVM) NS1 protein and through its C-terminal domain with SYT7, SYT8 and SYT9. The non-phosphorylated and phosphorylated forms are colocalized with PAIP1 in polysomes. Interacts with GTPBP1 (By similarity). Interacts with HABP4 (By similarity).</text>
</comment>
<comment type="subcellular location">
    <subcellularLocation>
        <location evidence="2">Nucleus</location>
        <location evidence="2">Nucleoplasm</location>
    </subcellularLocation>
    <subcellularLocation>
        <location evidence="2">Cytoplasm</location>
    </subcellularLocation>
    <subcellularLocation>
        <location evidence="4">Nucleus</location>
    </subcellularLocation>
    <subcellularLocation>
        <location evidence="4">Microsome</location>
    </subcellularLocation>
    <text evidence="2 4">Localized in cytoplasmic mRNP granules containing untranslated mRNAs (By similarity). Expressed predominantly in the nucleoplasm. The tyrosine phosphorylated form bound to RNA is found in microsomes (By similarity).</text>
</comment>
<comment type="domain">
    <text evidence="1">The domain containing eight Arg-Gly-Gly repeats (RGG/RXR-box) may be involved in RNA-binding and protein-protein interactions. It is methylated by PRMT1, and essential for nuclear localization (By similarity).</text>
</comment>
<comment type="PTM">
    <text>Phosphorylated on tyrosine. The membrane-bound form found in microsomes is phosphorylated in vitro by insulin receptor tyrosine kinase (INSR). Phosphorylation is inhibited upon binding to RNA, whereas the cytoplasmic form is poorly phosphorylated.</text>
</comment>
<accession>Q7TP47</accession>
<feature type="initiator methionine" description="Removed" evidence="3">
    <location>
        <position position="1"/>
    </location>
</feature>
<feature type="chain" id="PRO_0000081869" description="Heterogeneous nuclear ribonucleoprotein Q">
    <location>
        <begin position="2"/>
        <end position="533"/>
    </location>
</feature>
<feature type="domain" description="RRM 1" evidence="6">
    <location>
        <begin position="72"/>
        <end position="151"/>
    </location>
</feature>
<feature type="domain" description="RRM 2" evidence="6">
    <location>
        <begin position="153"/>
        <end position="235"/>
    </location>
</feature>
<feature type="domain" description="RRM 3" evidence="6">
    <location>
        <begin position="248"/>
        <end position="318"/>
    </location>
</feature>
<feature type="repeat" description="1-1">
    <location>
        <begin position="358"/>
        <end position="360"/>
    </location>
</feature>
<feature type="repeat" description="1-2">
    <location>
        <begin position="361"/>
        <end position="363"/>
    </location>
</feature>
<feature type="repeat" description="2-1">
    <location>
        <begin position="370"/>
        <end position="374"/>
    </location>
</feature>
<feature type="repeat" description="2-2">
    <location>
        <begin position="379"/>
        <end position="382"/>
    </location>
</feature>
<feature type="repeat" description="1-3">
    <location>
        <begin position="388"/>
        <end position="390"/>
    </location>
</feature>
<feature type="repeat" description="2-3">
    <location>
        <begin position="395"/>
        <end position="398"/>
    </location>
</feature>
<feature type="repeat" description="1-4">
    <location>
        <begin position="408"/>
        <end position="410"/>
    </location>
</feature>
<feature type="repeat" description="1-5">
    <location>
        <begin position="436"/>
        <end position="438"/>
    </location>
</feature>
<feature type="repeat" description="1-6">
    <location>
        <begin position="449"/>
        <end position="451"/>
    </location>
</feature>
<feature type="repeat" description="1-7">
    <location>
        <begin position="464"/>
        <end position="466"/>
    </location>
</feature>
<feature type="repeat" description="1-8">
    <location>
        <begin position="467"/>
        <end position="469"/>
    </location>
</feature>
<feature type="region of interest" description="Interaction with APOBEC1" evidence="1">
    <location>
        <begin position="310"/>
        <end position="471"/>
    </location>
</feature>
<feature type="region of interest" description="8 X 3 AA repeats of R-G-G">
    <location>
        <begin position="358"/>
        <end position="469"/>
    </location>
</feature>
<feature type="region of interest" description="3 X 4 AA repeats of Y-Y-G-Y">
    <location>
        <begin position="370"/>
        <end position="398"/>
    </location>
</feature>
<feature type="region of interest" description="Disordered" evidence="7">
    <location>
        <begin position="407"/>
        <end position="533"/>
    </location>
</feature>
<feature type="region of interest" description="Interaction with SMN" evidence="1">
    <location>
        <begin position="428"/>
        <end position="459"/>
    </location>
</feature>
<feature type="short sequence motif" description="Bipartite nuclear localization signal" evidence="5">
    <location>
        <begin position="474"/>
        <end position="488"/>
    </location>
</feature>
<feature type="compositionally biased region" description="Low complexity" evidence="7">
    <location>
        <begin position="414"/>
        <end position="432"/>
    </location>
</feature>
<feature type="compositionally biased region" description="Gly residues" evidence="7">
    <location>
        <begin position="460"/>
        <end position="472"/>
    </location>
</feature>
<feature type="compositionally biased region" description="Polar residues" evidence="7">
    <location>
        <begin position="490"/>
        <end position="505"/>
    </location>
</feature>
<feature type="modified residue" description="N-acetylalanine" evidence="3">
    <location>
        <position position="2"/>
    </location>
</feature>
<feature type="modified residue" description="Phosphoserine" evidence="3">
    <location>
        <position position="69"/>
    </location>
</feature>
<feature type="modified residue" description="N6-acetyllysine" evidence="3">
    <location>
        <position position="131"/>
    </location>
</feature>
<feature type="modified residue" description="N6-acetyllysine" evidence="3">
    <location>
        <position position="273"/>
    </location>
</feature>
<feature type="modified residue" description="Phosphotyrosine" evidence="3">
    <location>
        <position position="283"/>
    </location>
</feature>
<feature type="modified residue" description="Asymmetric dimethylarginine; by PRMT1; alternate" evidence="3">
    <location>
        <position position="354"/>
    </location>
</feature>
<feature type="modified residue" description="Omega-N-methylarginine; by PRMT1; alternate" evidence="3">
    <location>
        <position position="354"/>
    </location>
</feature>
<feature type="modified residue" description="Omega-N-methylarginine; by PRMT1" evidence="3">
    <location>
        <position position="406"/>
    </location>
</feature>
<feature type="modified residue" description="Asymmetric dimethylarginine; by PRMT1" evidence="3">
    <location>
        <position position="420"/>
    </location>
</feature>
<feature type="modified residue" description="Asymmetric dimethylarginine; by PRMT1; alternate" evidence="3">
    <location>
        <position position="428"/>
    </location>
</feature>
<feature type="modified residue" description="Omega-N-methylarginine; by PRMT1; alternate" evidence="3">
    <location>
        <position position="428"/>
    </location>
</feature>
<feature type="modified residue" description="Asymmetric dimethylarginine; alternate" evidence="3">
    <location>
        <position position="436"/>
    </location>
</feature>
<feature type="modified residue" description="Omega-N-methylarginine; alternate" evidence="3">
    <location>
        <position position="436"/>
    </location>
</feature>
<feature type="modified residue" description="Asymmetric dimethylarginine; by PRMT1; alternate" evidence="3">
    <location>
        <position position="446"/>
    </location>
</feature>
<feature type="modified residue" description="Omega-N-methylarginine; by PRMT1; alternate" evidence="3">
    <location>
        <position position="446"/>
    </location>
</feature>
<feature type="modified residue" description="Asymmetric dimethylarginine; by PRMT1; alternate" evidence="3">
    <location>
        <position position="449"/>
    </location>
</feature>
<feature type="modified residue" description="Omega-N-methylarginine; by PRMT1; alternate" evidence="3">
    <location>
        <position position="449"/>
    </location>
</feature>
<feature type="modified residue" description="Phosphoserine" evidence="3">
    <location>
        <position position="497"/>
    </location>
</feature>
<feature type="cross-link" description="Glycyl lysine isopeptide (Lys-Gly) (interchain with G-Cter in SUMO2)" evidence="3">
    <location>
        <position position="78"/>
    </location>
</feature>
<feature type="cross-link" description="Glycyl lysine isopeptide (Lys-Gly) (interchain with G-Cter in SUMO2)" evidence="3">
    <location>
        <position position="517"/>
    </location>
</feature>
<keyword id="KW-0007">Acetylation</keyword>
<keyword id="KW-0963">Cytoplasm</keyword>
<keyword id="KW-0256">Endoplasmic reticulum</keyword>
<keyword id="KW-1017">Isopeptide bond</keyword>
<keyword id="KW-0488">Methylation</keyword>
<keyword id="KW-0492">Microsome</keyword>
<keyword id="KW-0507">mRNA processing</keyword>
<keyword id="KW-0508">mRNA splicing</keyword>
<keyword id="KW-0539">Nucleus</keyword>
<keyword id="KW-0597">Phosphoprotein</keyword>
<keyword id="KW-1185">Reference proteome</keyword>
<keyword id="KW-0677">Repeat</keyword>
<keyword id="KW-0687">Ribonucleoprotein</keyword>
<keyword id="KW-0694">RNA-binding</keyword>
<keyword id="KW-0747">Spliceosome</keyword>
<keyword id="KW-0832">Ubl conjugation</keyword>
<proteinExistence type="evidence at transcript level"/>
<protein>
    <recommendedName>
        <fullName>Heterogeneous nuclear ribonucleoprotein Q</fullName>
        <shortName>hnRNP Q</shortName>
    </recommendedName>
    <alternativeName>
        <fullName>Liver regeneration-related protein LRRG077</fullName>
    </alternativeName>
    <alternativeName>
        <fullName>Synaptotagmin-binding, cytoplasmic RNA-interacting protein</fullName>
    </alternativeName>
</protein>
<evidence type="ECO:0000250" key="1"/>
<evidence type="ECO:0000250" key="2">
    <source>
        <dbReference type="UniProtKB" id="O43390"/>
    </source>
</evidence>
<evidence type="ECO:0000250" key="3">
    <source>
        <dbReference type="UniProtKB" id="O60506"/>
    </source>
</evidence>
<evidence type="ECO:0000250" key="4">
    <source>
        <dbReference type="UniProtKB" id="Q7TMK9"/>
    </source>
</evidence>
<evidence type="ECO:0000255" key="5"/>
<evidence type="ECO:0000255" key="6">
    <source>
        <dbReference type="PROSITE-ProRule" id="PRU00176"/>
    </source>
</evidence>
<evidence type="ECO:0000256" key="7">
    <source>
        <dbReference type="SAM" id="MobiDB-lite"/>
    </source>
</evidence>